<organism>
    <name type="scientific">Neisseria meningitidis serogroup A / serotype 4A (strain DSM 15465 / Z2491)</name>
    <dbReference type="NCBI Taxonomy" id="122587"/>
    <lineage>
        <taxon>Bacteria</taxon>
        <taxon>Pseudomonadati</taxon>
        <taxon>Pseudomonadota</taxon>
        <taxon>Betaproteobacteria</taxon>
        <taxon>Neisseriales</taxon>
        <taxon>Neisseriaceae</taxon>
        <taxon>Neisseria</taxon>
    </lineage>
</organism>
<keyword id="KW-0456">Lyase</keyword>
<keyword id="KW-0479">Metal-binding</keyword>
<keyword id="KW-0533">Nickel</keyword>
<feature type="chain" id="PRO_0000168094" description="Lactoylglutathione lyase">
    <location>
        <begin position="1"/>
        <end position="138"/>
    </location>
</feature>
<feature type="domain" description="VOC" evidence="2">
    <location>
        <begin position="2"/>
        <end position="126"/>
    </location>
</feature>
<feature type="active site" description="Proton donor/acceptor" evidence="1">
    <location>
        <position position="122"/>
    </location>
</feature>
<feature type="binding site" evidence="1">
    <location>
        <position position="5"/>
    </location>
    <ligand>
        <name>Ni(2+)</name>
        <dbReference type="ChEBI" id="CHEBI:49786"/>
    </ligand>
</feature>
<feature type="binding site" evidence="1">
    <location>
        <position position="9"/>
    </location>
    <ligand>
        <name>substrate</name>
    </ligand>
</feature>
<feature type="binding site" evidence="1">
    <location>
        <position position="56"/>
    </location>
    <ligand>
        <name>Ni(2+)</name>
        <dbReference type="ChEBI" id="CHEBI:49786"/>
    </ligand>
</feature>
<feature type="binding site" evidence="1">
    <location>
        <position position="60"/>
    </location>
    <ligand>
        <name>substrate</name>
    </ligand>
</feature>
<feature type="binding site" evidence="1">
    <location>
        <position position="74"/>
    </location>
    <ligand>
        <name>Ni(2+)</name>
        <dbReference type="ChEBI" id="CHEBI:49786"/>
    </ligand>
</feature>
<feature type="binding site" evidence="1">
    <location>
        <position position="74"/>
    </location>
    <ligand>
        <name>substrate</name>
    </ligand>
</feature>
<feature type="binding site" evidence="1">
    <location>
        <position position="122"/>
    </location>
    <ligand>
        <name>Ni(2+)</name>
        <dbReference type="ChEBI" id="CHEBI:49786"/>
    </ligand>
</feature>
<reference key="1">
    <citation type="journal article" date="2000" name="Nature">
        <title>Complete DNA sequence of a serogroup A strain of Neisseria meningitidis Z2491.</title>
        <authorList>
            <person name="Parkhill J."/>
            <person name="Achtman M."/>
            <person name="James K.D."/>
            <person name="Bentley S.D."/>
            <person name="Churcher C.M."/>
            <person name="Klee S.R."/>
            <person name="Morelli G."/>
            <person name="Basham D."/>
            <person name="Brown D."/>
            <person name="Chillingworth T."/>
            <person name="Davies R.M."/>
            <person name="Davis P."/>
            <person name="Devlin K."/>
            <person name="Feltwell T."/>
            <person name="Hamlin N."/>
            <person name="Holroyd S."/>
            <person name="Jagels K."/>
            <person name="Leather S."/>
            <person name="Moule S."/>
            <person name="Mungall K.L."/>
            <person name="Quail M.A."/>
            <person name="Rajandream M.A."/>
            <person name="Rutherford K.M."/>
            <person name="Simmonds M."/>
            <person name="Skelton J."/>
            <person name="Whitehead S."/>
            <person name="Spratt B.G."/>
            <person name="Barrell B.G."/>
        </authorList>
    </citation>
    <scope>NUCLEOTIDE SEQUENCE [LARGE SCALE GENOMIC DNA]</scope>
    <source>
        <strain>DSM 15465 / Z2491</strain>
    </source>
</reference>
<sequence length="138" mass="15669">MRLLHTMLRVGNLEKSLDFYQNVLGMKLLRRKDYPEGRFTLAFVGYGDETDSTVLELTHNWDTERYDLGNAYGHIAVEVDDAYEACERVKRQGGNVVREAGPMKHGTTVIAFVEDPDGYKIEFIQKKSGDDSVAYQTA</sequence>
<dbReference type="EC" id="4.4.1.5"/>
<dbReference type="EMBL" id="AL157959">
    <property type="protein sequence ID" value="CAM09244.1"/>
    <property type="molecule type" value="Genomic_DNA"/>
</dbReference>
<dbReference type="PIR" id="G81211">
    <property type="entry name" value="G81211"/>
</dbReference>
<dbReference type="RefSeq" id="WP_002216418.1">
    <property type="nucleotide sequence ID" value="NC_003116.1"/>
</dbReference>
<dbReference type="SMR" id="P0A0T2"/>
<dbReference type="EnsemblBacteria" id="CAM09244">
    <property type="protein sequence ID" value="CAM09244"/>
    <property type="gene ID" value="NMA2147"/>
</dbReference>
<dbReference type="GeneID" id="93387432"/>
<dbReference type="KEGG" id="nma:NMA2147"/>
<dbReference type="HOGENOM" id="CLU_046006_8_1_4"/>
<dbReference type="UniPathway" id="UPA00619">
    <property type="reaction ID" value="UER00675"/>
</dbReference>
<dbReference type="Proteomes" id="UP000000626">
    <property type="component" value="Chromosome"/>
</dbReference>
<dbReference type="GO" id="GO:0005737">
    <property type="term" value="C:cytoplasm"/>
    <property type="evidence" value="ECO:0007669"/>
    <property type="project" value="TreeGrafter"/>
</dbReference>
<dbReference type="GO" id="GO:0004462">
    <property type="term" value="F:lactoylglutathione lyase activity"/>
    <property type="evidence" value="ECO:0007669"/>
    <property type="project" value="UniProtKB-EC"/>
</dbReference>
<dbReference type="GO" id="GO:0046872">
    <property type="term" value="F:metal ion binding"/>
    <property type="evidence" value="ECO:0007669"/>
    <property type="project" value="UniProtKB-KW"/>
</dbReference>
<dbReference type="GO" id="GO:0019243">
    <property type="term" value="P:methylglyoxal catabolic process to D-lactate via S-lactoyl-glutathione"/>
    <property type="evidence" value="ECO:0007669"/>
    <property type="project" value="TreeGrafter"/>
</dbReference>
<dbReference type="CDD" id="cd16358">
    <property type="entry name" value="GlxI_Ni"/>
    <property type="match status" value="1"/>
</dbReference>
<dbReference type="Gene3D" id="3.10.180.10">
    <property type="entry name" value="2,3-Dihydroxybiphenyl 1,2-Dioxygenase, domain 1"/>
    <property type="match status" value="1"/>
</dbReference>
<dbReference type="InterPro" id="IPR029068">
    <property type="entry name" value="Glyas_Bleomycin-R_OHBP_Dase"/>
</dbReference>
<dbReference type="InterPro" id="IPR004360">
    <property type="entry name" value="Glyas_Fos-R_dOase_dom"/>
</dbReference>
<dbReference type="InterPro" id="IPR004361">
    <property type="entry name" value="Glyoxalase_1"/>
</dbReference>
<dbReference type="InterPro" id="IPR018146">
    <property type="entry name" value="Glyoxalase_1_CS"/>
</dbReference>
<dbReference type="InterPro" id="IPR037523">
    <property type="entry name" value="VOC"/>
</dbReference>
<dbReference type="NCBIfam" id="TIGR00068">
    <property type="entry name" value="glyox_I"/>
    <property type="match status" value="1"/>
</dbReference>
<dbReference type="PANTHER" id="PTHR46036">
    <property type="entry name" value="LACTOYLGLUTATHIONE LYASE"/>
    <property type="match status" value="1"/>
</dbReference>
<dbReference type="PANTHER" id="PTHR46036:SF5">
    <property type="entry name" value="LACTOYLGLUTATHIONE LYASE"/>
    <property type="match status" value="1"/>
</dbReference>
<dbReference type="Pfam" id="PF00903">
    <property type="entry name" value="Glyoxalase"/>
    <property type="match status" value="1"/>
</dbReference>
<dbReference type="SUPFAM" id="SSF54593">
    <property type="entry name" value="Glyoxalase/Bleomycin resistance protein/Dihydroxybiphenyl dioxygenase"/>
    <property type="match status" value="1"/>
</dbReference>
<dbReference type="PROSITE" id="PS00934">
    <property type="entry name" value="GLYOXALASE_I_1"/>
    <property type="match status" value="1"/>
</dbReference>
<dbReference type="PROSITE" id="PS00935">
    <property type="entry name" value="GLYOXALASE_I_2"/>
    <property type="match status" value="1"/>
</dbReference>
<dbReference type="PROSITE" id="PS51819">
    <property type="entry name" value="VOC"/>
    <property type="match status" value="1"/>
</dbReference>
<evidence type="ECO:0000250" key="1"/>
<evidence type="ECO:0000255" key="2">
    <source>
        <dbReference type="PROSITE-ProRule" id="PRU01163"/>
    </source>
</evidence>
<evidence type="ECO:0000305" key="3"/>
<gene>
    <name type="primary">gloA</name>
    <name type="ordered locus">NMA2147</name>
</gene>
<protein>
    <recommendedName>
        <fullName>Lactoylglutathione lyase</fullName>
        <ecNumber>4.4.1.5</ecNumber>
    </recommendedName>
    <alternativeName>
        <fullName>Aldoketomutase</fullName>
    </alternativeName>
    <alternativeName>
        <fullName>Glyoxalase I</fullName>
        <shortName>Glx I</shortName>
    </alternativeName>
    <alternativeName>
        <fullName>Ketone-aldehyde mutase</fullName>
    </alternativeName>
    <alternativeName>
        <fullName>Methylglyoxalase</fullName>
    </alternativeName>
    <alternativeName>
        <fullName>S-D-lactoylglutathione methylglyoxal lyase</fullName>
    </alternativeName>
</protein>
<proteinExistence type="inferred from homology"/>
<accession>P0A0T2</accession>
<accession>A1ITX5</accession>
<accession>O33393</accession>
<name>LGUL_NEIMA</name>
<comment type="function">
    <text evidence="1">Catalyzes the conversion of hemimercaptal, formed from methylglyoxal and glutathione, to S-lactoylglutathione.</text>
</comment>
<comment type="catalytic activity">
    <reaction>
        <text>(R)-S-lactoylglutathione = methylglyoxal + glutathione</text>
        <dbReference type="Rhea" id="RHEA:19069"/>
        <dbReference type="ChEBI" id="CHEBI:17158"/>
        <dbReference type="ChEBI" id="CHEBI:57474"/>
        <dbReference type="ChEBI" id="CHEBI:57925"/>
        <dbReference type="EC" id="4.4.1.5"/>
    </reaction>
</comment>
<comment type="cofactor">
    <cofactor evidence="1">
        <name>Ni(2+)</name>
        <dbReference type="ChEBI" id="CHEBI:49786"/>
    </cofactor>
    <text evidence="1">Binds 1 nickel ion per subunit.</text>
</comment>
<comment type="pathway">
    <text>Secondary metabolite metabolism; methylglyoxal degradation; (R)-lactate from methylglyoxal: step 1/2.</text>
</comment>
<comment type="similarity">
    <text evidence="3">Belongs to the glyoxalase I family.</text>
</comment>